<accession>O75056</accession>
<accession>Q5T1Z6</accession>
<accession>Q5T1Z7</accession>
<accession>Q96CT3</accession>
<accession>Q96PR8</accession>
<gene>
    <name type="primary">SDC3</name>
    <name type="synonym">KIAA0468</name>
</gene>
<feature type="chain" id="PRO_0000183989" description="Syndecan-3">
    <location>
        <begin position="1"/>
        <end position="442"/>
    </location>
</feature>
<feature type="topological domain" description="Extracellular" evidence="4">
    <location>
        <begin position="1"/>
        <end position="387"/>
    </location>
</feature>
<feature type="transmembrane region" description="Helical" evidence="4">
    <location>
        <begin position="388"/>
        <end position="408"/>
    </location>
</feature>
<feature type="topological domain" description="Cytoplasmic" evidence="4">
    <location>
        <begin position="409"/>
        <end position="442"/>
    </location>
</feature>
<feature type="region of interest" description="Disordered" evidence="5">
    <location>
        <begin position="1"/>
        <end position="24"/>
    </location>
</feature>
<feature type="region of interest" description="Disordered" evidence="5">
    <location>
        <begin position="57"/>
        <end position="87"/>
    </location>
</feature>
<feature type="region of interest" description="Disordered" evidence="5">
    <location>
        <begin position="150"/>
        <end position="173"/>
    </location>
</feature>
<feature type="region of interest" description="Disordered" evidence="5">
    <location>
        <begin position="225"/>
        <end position="326"/>
    </location>
</feature>
<feature type="region of interest" description="Disordered" evidence="5">
    <location>
        <begin position="340"/>
        <end position="367"/>
    </location>
</feature>
<feature type="region of interest" description="Disordered" evidence="5">
    <location>
        <begin position="419"/>
        <end position="442"/>
    </location>
</feature>
<feature type="compositionally biased region" description="Gly residues" evidence="5">
    <location>
        <begin position="13"/>
        <end position="24"/>
    </location>
</feature>
<feature type="compositionally biased region" description="Acidic residues" evidence="5">
    <location>
        <begin position="63"/>
        <end position="77"/>
    </location>
</feature>
<feature type="compositionally biased region" description="Low complexity" evidence="5">
    <location>
        <begin position="156"/>
        <end position="173"/>
    </location>
</feature>
<feature type="compositionally biased region" description="Low complexity" evidence="5">
    <location>
        <begin position="225"/>
        <end position="238"/>
    </location>
</feature>
<feature type="compositionally biased region" description="Low complexity" evidence="5">
    <location>
        <begin position="275"/>
        <end position="286"/>
    </location>
</feature>
<feature type="compositionally biased region" description="Polar residues" evidence="5">
    <location>
        <begin position="288"/>
        <end position="299"/>
    </location>
</feature>
<feature type="compositionally biased region" description="Basic and acidic residues" evidence="5">
    <location>
        <begin position="433"/>
        <end position="442"/>
    </location>
</feature>
<feature type="site" description="Cleavage of ectodomain" evidence="4">
    <location>
        <begin position="383"/>
        <end position="384"/>
    </location>
</feature>
<feature type="modified residue" description="Phosphotyrosine" evidence="9">
    <location>
        <position position="409"/>
    </location>
</feature>
<feature type="modified residue" description="Phosphotyrosine" evidence="9">
    <location>
        <position position="419"/>
    </location>
</feature>
<feature type="modified residue" description="Phosphotyrosine" evidence="9">
    <location>
        <position position="431"/>
    </location>
</feature>
<feature type="modified residue" description="Phosphotyrosine" evidence="9">
    <location>
        <position position="441"/>
    </location>
</feature>
<feature type="glycosylation site" description="O-linked (Xyl...) (glycosaminoglycan) serine" evidence="4">
    <location>
        <position position="80"/>
    </location>
</feature>
<feature type="glycosylation site" description="O-linked (Xyl...) (glycosaminoglycan) serine" evidence="4">
    <location>
        <position position="82"/>
    </location>
</feature>
<feature type="glycosylation site" description="O-linked (Xyl...) (glycosaminoglycan) serine" evidence="4">
    <location>
        <position position="84"/>
    </location>
</feature>
<feature type="glycosylation site" description="O-linked (Xyl...) (glycosaminoglycan) serine" evidence="4">
    <location>
        <position position="91"/>
    </location>
</feature>
<feature type="glycosylation site" description="O-linked (GalNAc) serine; by GALNT13" evidence="7">
    <location>
        <position position="108"/>
    </location>
</feature>
<feature type="glycosylation site" description="O-linked (GalNAc) threonine; by GALNT13" evidence="7">
    <location>
        <position position="109"/>
    </location>
</feature>
<feature type="glycosylation site" description="O-linked (GalNAc) threonine; by GALNT13" evidence="7">
    <location>
        <position position="110"/>
    </location>
</feature>
<feature type="glycosylation site" description="O-linked (GalNAc) serine; by GALNT13" evidence="7">
    <location>
        <position position="160"/>
    </location>
</feature>
<feature type="glycosylation site" description="O-linked (GalNAc) threonine; by GALNT13" evidence="7">
    <location>
        <position position="161"/>
    </location>
</feature>
<feature type="glycosylation site" description="O-linked (GalNAc) threonine; by GALNT13" evidence="7">
    <location>
        <position position="162"/>
    </location>
</feature>
<feature type="glycosylation site" description="O-linked (GalNAc) threonine; by GALNT13" evidence="7">
    <location>
        <position position="169"/>
    </location>
</feature>
<feature type="glycosylation site" description="O-linked (GalNAc) serine; by GALNT13" evidence="7">
    <location>
        <position position="170"/>
    </location>
</feature>
<feature type="glycosylation site" description="O-linked (GalNAc) threonine; by GALNT13" evidence="7">
    <location>
        <position position="171"/>
    </location>
</feature>
<feature type="glycosylation site" description="O-linked (Xyl...) (glycosaminoglycan) serine" evidence="4">
    <location>
        <position position="314"/>
    </location>
</feature>
<feature type="glycosylation site" description="O-linked (Xyl...) (glycosaminoglycan) serine" evidence="4">
    <location>
        <position position="367"/>
    </location>
</feature>
<feature type="sequence variant" id="VAR_027251" description="In dbSNP:rs2491132.">
    <original>V</original>
    <variation>I</variation>
    <location>
        <position position="208"/>
    </location>
</feature>
<feature type="sequence variant" id="VAR_027252" description="In dbSNP:rs4949184." evidence="6">
    <original>D</original>
    <variation>N</variation>
    <location>
        <position position="303"/>
    </location>
</feature>
<feature type="sequence variant" id="VAR_027253" description="In dbSNP:rs2282440.">
    <original>T</original>
    <variation>I</variation>
    <location>
        <position position="329"/>
    </location>
</feature>
<proteinExistence type="evidence at protein level"/>
<name>SDC3_HUMAN</name>
<sequence>MKPGPPHRAGAAHGAGAGAGAAAGPGARGLLLPPLLLLLLAGRAAGAQRWRSENFERPVDLEGSGDDDSFPDDELDDLYSGSGSGYFEQESGIETAMRFSPDVALAVSTTPAVLPTTNIQPVGTPFEELPSERPTLEPATSPLVVTEVPEEPSQRATTVSTTMATTAATSTGDPTVATVPATVATATPSTPAAPPFTATTAVIRTTGVRRLLPLPLTTVATARATTPEAPSPPTTAAVLDTEAPTPRLVSTATSRPRALPRPATTQEPDIPERSTLPLGTTAPGPTEVAQTPTPETFLTTIRDEPEVPVSGGPSGDFELPEEETTQPDTANEVVAVGGAAAKASSPPGTLPKGARPGPGLLDNAIDSGSSAAQLPQKSILERKEVLVAVIVGGVVGALFAAFLVTLLIYRMKKKDEGSYTLEEPKQASVTYQKPDKQEEFYA</sequence>
<organism>
    <name type="scientific">Homo sapiens</name>
    <name type="common">Human</name>
    <dbReference type="NCBI Taxonomy" id="9606"/>
    <lineage>
        <taxon>Eukaryota</taxon>
        <taxon>Metazoa</taxon>
        <taxon>Chordata</taxon>
        <taxon>Craniata</taxon>
        <taxon>Vertebrata</taxon>
        <taxon>Euteleostomi</taxon>
        <taxon>Mammalia</taxon>
        <taxon>Eutheria</taxon>
        <taxon>Euarchontoglires</taxon>
        <taxon>Primates</taxon>
        <taxon>Haplorrhini</taxon>
        <taxon>Catarrhini</taxon>
        <taxon>Hominidae</taxon>
        <taxon>Homo</taxon>
    </lineage>
</organism>
<comment type="function">
    <text evidence="1 6">Cell surface proteoglycan that may bear heparan sulfate (By similarity). May have a role in the organization of cell shape by affecting the actin cytoskeleton, possibly by transferring signals from the cell surface in a sugar-dependent mechanism.</text>
</comment>
<comment type="subunit">
    <text evidence="1 2 3 8">Interacts with TIAM1 (PubMed:23395182). Interacts with PTN (via heparan sulfate chains); this interaction mediates the neurite outgrowth-promoting signal from PTN to the cytoskeleton of growing neurites; this interaction mediates osteoblast recruitment (By similarity). Interacts with MDK; this interaction induces SDC3 clustering; this interaction induces neuronal cell adhesion and neurite outgrowth (By similarity).</text>
</comment>
<comment type="interaction">
    <interactant intactId="EBI-1642090">
        <id>O75056</id>
    </interactant>
    <interactant intactId="EBI-1172957">
        <id>P34741</id>
        <label>SDC2</label>
    </interactant>
    <organismsDiffer>false</organismsDiffer>
    <experiments>2</experiments>
</comment>
<comment type="interaction">
    <interactant intactId="EBI-1642090">
        <id>O75056</id>
    </interactant>
    <interactant intactId="EBI-1642090">
        <id>O75056</id>
        <label>SDC3</label>
    </interactant>
    <organismsDiffer>false</organismsDiffer>
    <experiments>3</experiments>
</comment>
<comment type="interaction">
    <interactant intactId="EBI-1642090">
        <id>O75056</id>
    </interactant>
    <interactant intactId="EBI-3913237">
        <id>P31431</id>
        <label>SDC4</label>
    </interactant>
    <organismsDiffer>false</organismsDiffer>
    <experiments>2</experiments>
</comment>
<comment type="subcellular location">
    <subcellularLocation>
        <location>Cell membrane</location>
        <topology>Single-pass type I membrane protein</topology>
    </subcellularLocation>
</comment>
<comment type="tissue specificity">
    <text evidence="6">Expressed in the nervous system, the adrenal gland, and the spleen.</text>
</comment>
<comment type="PTM">
    <text evidence="10">O-glycosylated within the Thr/Ser-rich region which could interact with lectin domains on other molecules.</text>
</comment>
<comment type="similarity">
    <text evidence="10">Belongs to the syndecan proteoglycan family.</text>
</comment>
<comment type="sequence caution" evidence="10">
    <conflict type="miscellaneous discrepancy">
        <sequence resource="EMBL-CDS" id="BAA32313"/>
    </conflict>
    <text>Intron retention.</text>
</comment>
<keyword id="KW-1003">Cell membrane</keyword>
<keyword id="KW-0325">Glycoprotein</keyword>
<keyword id="KW-0357">Heparan sulfate</keyword>
<keyword id="KW-0472">Membrane</keyword>
<keyword id="KW-0597">Phosphoprotein</keyword>
<keyword id="KW-0654">Proteoglycan</keyword>
<keyword id="KW-1267">Proteomics identification</keyword>
<keyword id="KW-1185">Reference proteome</keyword>
<keyword id="KW-0812">Transmembrane</keyword>
<keyword id="KW-1133">Transmembrane helix</keyword>
<reference key="1">
    <citation type="journal article" date="2001" name="J. Cell. Biochem.">
        <title>Cloning and characterization of human syndecan-3.</title>
        <authorList>
            <person name="Berndt C."/>
            <person name="Casaroli-Marano R.P."/>
            <person name="Vilaro S."/>
            <person name="Reina M."/>
        </authorList>
    </citation>
    <scope>NUCLEOTIDE SEQUENCE [MRNA]</scope>
    <scope>FUNCTION</scope>
    <scope>TISSUE SPECIFICITY</scope>
    <scope>VARIANT ASN-303</scope>
</reference>
<reference key="2">
    <citation type="journal article" date="1997" name="DNA Res.">
        <title>Characterization of cDNA clones in size-fractionated cDNA libraries from human brain.</title>
        <authorList>
            <person name="Seki N."/>
            <person name="Ohira M."/>
            <person name="Nagase T."/>
            <person name="Ishikawa K."/>
            <person name="Miyajima N."/>
            <person name="Nakajima D."/>
            <person name="Nomura N."/>
            <person name="Ohara O."/>
        </authorList>
    </citation>
    <scope>NUCLEOTIDE SEQUENCE [LARGE SCALE MRNA]</scope>
    <source>
        <tissue>Brain</tissue>
    </source>
</reference>
<reference key="3">
    <citation type="journal article" date="2006" name="Nature">
        <title>The DNA sequence and biological annotation of human chromosome 1.</title>
        <authorList>
            <person name="Gregory S.G."/>
            <person name="Barlow K.F."/>
            <person name="McLay K.E."/>
            <person name="Kaul R."/>
            <person name="Swarbreck D."/>
            <person name="Dunham A."/>
            <person name="Scott C.E."/>
            <person name="Howe K.L."/>
            <person name="Woodfine K."/>
            <person name="Spencer C.C.A."/>
            <person name="Jones M.C."/>
            <person name="Gillson C."/>
            <person name="Searle S."/>
            <person name="Zhou Y."/>
            <person name="Kokocinski F."/>
            <person name="McDonald L."/>
            <person name="Evans R."/>
            <person name="Phillips K."/>
            <person name="Atkinson A."/>
            <person name="Cooper R."/>
            <person name="Jones C."/>
            <person name="Hall R.E."/>
            <person name="Andrews T.D."/>
            <person name="Lloyd C."/>
            <person name="Ainscough R."/>
            <person name="Almeida J.P."/>
            <person name="Ambrose K.D."/>
            <person name="Anderson F."/>
            <person name="Andrew R.W."/>
            <person name="Ashwell R.I.S."/>
            <person name="Aubin K."/>
            <person name="Babbage A.K."/>
            <person name="Bagguley C.L."/>
            <person name="Bailey J."/>
            <person name="Beasley H."/>
            <person name="Bethel G."/>
            <person name="Bird C.P."/>
            <person name="Bray-Allen S."/>
            <person name="Brown J.Y."/>
            <person name="Brown A.J."/>
            <person name="Buckley D."/>
            <person name="Burton J."/>
            <person name="Bye J."/>
            <person name="Carder C."/>
            <person name="Chapman J.C."/>
            <person name="Clark S.Y."/>
            <person name="Clarke G."/>
            <person name="Clee C."/>
            <person name="Cobley V."/>
            <person name="Collier R.E."/>
            <person name="Corby N."/>
            <person name="Coville G.J."/>
            <person name="Davies J."/>
            <person name="Deadman R."/>
            <person name="Dunn M."/>
            <person name="Earthrowl M."/>
            <person name="Ellington A.G."/>
            <person name="Errington H."/>
            <person name="Frankish A."/>
            <person name="Frankland J."/>
            <person name="French L."/>
            <person name="Garner P."/>
            <person name="Garnett J."/>
            <person name="Gay L."/>
            <person name="Ghori M.R.J."/>
            <person name="Gibson R."/>
            <person name="Gilby L.M."/>
            <person name="Gillett W."/>
            <person name="Glithero R.J."/>
            <person name="Grafham D.V."/>
            <person name="Griffiths C."/>
            <person name="Griffiths-Jones S."/>
            <person name="Grocock R."/>
            <person name="Hammond S."/>
            <person name="Harrison E.S.I."/>
            <person name="Hart E."/>
            <person name="Haugen E."/>
            <person name="Heath P.D."/>
            <person name="Holmes S."/>
            <person name="Holt K."/>
            <person name="Howden P.J."/>
            <person name="Hunt A.R."/>
            <person name="Hunt S.E."/>
            <person name="Hunter G."/>
            <person name="Isherwood J."/>
            <person name="James R."/>
            <person name="Johnson C."/>
            <person name="Johnson D."/>
            <person name="Joy A."/>
            <person name="Kay M."/>
            <person name="Kershaw J.K."/>
            <person name="Kibukawa M."/>
            <person name="Kimberley A.M."/>
            <person name="King A."/>
            <person name="Knights A.J."/>
            <person name="Lad H."/>
            <person name="Laird G."/>
            <person name="Lawlor S."/>
            <person name="Leongamornlert D.A."/>
            <person name="Lloyd D.M."/>
            <person name="Loveland J."/>
            <person name="Lovell J."/>
            <person name="Lush M.J."/>
            <person name="Lyne R."/>
            <person name="Martin S."/>
            <person name="Mashreghi-Mohammadi M."/>
            <person name="Matthews L."/>
            <person name="Matthews N.S.W."/>
            <person name="McLaren S."/>
            <person name="Milne S."/>
            <person name="Mistry S."/>
            <person name="Moore M.J.F."/>
            <person name="Nickerson T."/>
            <person name="O'Dell C.N."/>
            <person name="Oliver K."/>
            <person name="Palmeiri A."/>
            <person name="Palmer S.A."/>
            <person name="Parker A."/>
            <person name="Patel D."/>
            <person name="Pearce A.V."/>
            <person name="Peck A.I."/>
            <person name="Pelan S."/>
            <person name="Phelps K."/>
            <person name="Phillimore B.J."/>
            <person name="Plumb R."/>
            <person name="Rajan J."/>
            <person name="Raymond C."/>
            <person name="Rouse G."/>
            <person name="Saenphimmachak C."/>
            <person name="Sehra H.K."/>
            <person name="Sheridan E."/>
            <person name="Shownkeen R."/>
            <person name="Sims S."/>
            <person name="Skuce C.D."/>
            <person name="Smith M."/>
            <person name="Steward C."/>
            <person name="Subramanian S."/>
            <person name="Sycamore N."/>
            <person name="Tracey A."/>
            <person name="Tromans A."/>
            <person name="Van Helmond Z."/>
            <person name="Wall M."/>
            <person name="Wallis J.M."/>
            <person name="White S."/>
            <person name="Whitehead S.L."/>
            <person name="Wilkinson J.E."/>
            <person name="Willey D.L."/>
            <person name="Williams H."/>
            <person name="Wilming L."/>
            <person name="Wray P.W."/>
            <person name="Wu Z."/>
            <person name="Coulson A."/>
            <person name="Vaudin M."/>
            <person name="Sulston J.E."/>
            <person name="Durbin R.M."/>
            <person name="Hubbard T."/>
            <person name="Wooster R."/>
            <person name="Dunham I."/>
            <person name="Carter N.P."/>
            <person name="McVean G."/>
            <person name="Ross M.T."/>
            <person name="Harrow J."/>
            <person name="Olson M.V."/>
            <person name="Beck S."/>
            <person name="Rogers J."/>
            <person name="Bentley D.R."/>
        </authorList>
    </citation>
    <scope>NUCLEOTIDE SEQUENCE [LARGE SCALE GENOMIC DNA]</scope>
</reference>
<reference key="4">
    <citation type="journal article" date="2004" name="Genome Res.">
        <title>The status, quality, and expansion of the NIH full-length cDNA project: the Mammalian Gene Collection (MGC).</title>
        <authorList>
            <consortium name="The MGC Project Team"/>
        </authorList>
    </citation>
    <scope>NUCLEOTIDE SEQUENCE [LARGE SCALE MRNA]</scope>
    <source>
        <tissue>Muscle</tissue>
    </source>
</reference>
<reference key="5">
    <citation type="journal article" date="1997" name="Biochem. Biophys. Res. Commun.">
        <title>Phosphorylation of recombinant N-syndecan (syndecan 3) core protein.</title>
        <authorList>
            <person name="Asundi V.K."/>
            <person name="Carey D.J."/>
        </authorList>
    </citation>
    <scope>PHOSPHORYLATION AT TYR-409; TYR-419; TYR-431 AND TYR-441</scope>
</reference>
<reference key="6">
    <citation type="journal article" date="2003" name="J. Biol. Chem.">
        <title>Cloning and characterization of a new human UDP-N-acetyl-alpha-D-galactosamine:polypeptide N-acetylgalactosaminyltransferase, designated pp-GalNAc-T13, that is specifically expressed in neurons and synthesizes GalNAc alpha-serine/threonine antigen.</title>
        <authorList>
            <person name="Zhang Y."/>
            <person name="Iwasaki H."/>
            <person name="Wang H."/>
            <person name="Kudo T."/>
            <person name="Kalka T.B."/>
            <person name="Hennet T."/>
            <person name="Kubota T."/>
            <person name="Cheng L."/>
            <person name="Inaba N."/>
            <person name="Gotoh M."/>
            <person name="Togayachi A."/>
            <person name="Guo J.-M."/>
            <person name="Hisatomi H."/>
            <person name="Nakajima K."/>
            <person name="Nishihara S."/>
            <person name="Nakamura M."/>
            <person name="Marth J.D."/>
            <person name="Narimatsu H."/>
        </authorList>
    </citation>
    <scope>GLYCOSYLATION AT SER-108; THR-109; THR-110; SER-160; THR-161; THR-162; THR-169; SER-170 AND THR-171</scope>
</reference>
<reference key="7">
    <citation type="journal article" date="2013" name="Structure">
        <title>The structure of the Tiam1 PDZ domain/ phospho-syndecan1 complex reveals a ligand conformation that modulates protein dynamics.</title>
        <authorList>
            <person name="Liu X."/>
            <person name="Shepherd T.R."/>
            <person name="Murray A.M."/>
            <person name="Xu Z."/>
            <person name="Fuentes E.J."/>
        </authorList>
    </citation>
    <scope>INTERACTION WITH TIAM1</scope>
</reference>
<evidence type="ECO:0000250" key="1"/>
<evidence type="ECO:0000250" key="2">
    <source>
        <dbReference type="UniProtKB" id="P33671"/>
    </source>
</evidence>
<evidence type="ECO:0000250" key="3">
    <source>
        <dbReference type="UniProtKB" id="Q64519"/>
    </source>
</evidence>
<evidence type="ECO:0000255" key="4"/>
<evidence type="ECO:0000256" key="5">
    <source>
        <dbReference type="SAM" id="MobiDB-lite"/>
    </source>
</evidence>
<evidence type="ECO:0000269" key="6">
    <source>
    </source>
</evidence>
<evidence type="ECO:0000269" key="7">
    <source>
    </source>
</evidence>
<evidence type="ECO:0000269" key="8">
    <source>
    </source>
</evidence>
<evidence type="ECO:0000269" key="9">
    <source>
    </source>
</evidence>
<evidence type="ECO:0000305" key="10"/>
<protein>
    <recommendedName>
        <fullName>Syndecan-3</fullName>
        <shortName>SYND3</shortName>
    </recommendedName>
</protein>
<dbReference type="EMBL" id="AF248634">
    <property type="protein sequence ID" value="AAK39969.1"/>
    <property type="molecule type" value="mRNA"/>
</dbReference>
<dbReference type="EMBL" id="AB007937">
    <property type="protein sequence ID" value="BAA32313.2"/>
    <property type="status" value="ALT_SEQ"/>
    <property type="molecule type" value="mRNA"/>
</dbReference>
<dbReference type="EMBL" id="AL445235">
    <property type="status" value="NOT_ANNOTATED_CDS"/>
    <property type="molecule type" value="Genomic_DNA"/>
</dbReference>
<dbReference type="EMBL" id="BC013974">
    <property type="status" value="NOT_ANNOTATED_CDS"/>
    <property type="molecule type" value="mRNA"/>
</dbReference>
<dbReference type="CCDS" id="CCDS30661.1"/>
<dbReference type="RefSeq" id="NP_055469.3">
    <property type="nucleotide sequence ID" value="NM_014654.3"/>
</dbReference>
<dbReference type="SASBDB" id="O75056"/>
<dbReference type="SMR" id="O75056"/>
<dbReference type="BioGRID" id="115027">
    <property type="interactions" value="37"/>
</dbReference>
<dbReference type="DIP" id="DIP-29944N"/>
<dbReference type="FunCoup" id="O75056">
    <property type="interactions" value="274"/>
</dbReference>
<dbReference type="IntAct" id="O75056">
    <property type="interactions" value="15"/>
</dbReference>
<dbReference type="MINT" id="O75056"/>
<dbReference type="STRING" id="9606.ENSP00000344468"/>
<dbReference type="GlyCosmos" id="O75056">
    <property type="glycosylation" value="18 sites, 3 glycans"/>
</dbReference>
<dbReference type="GlyGen" id="O75056">
    <property type="glycosylation" value="34 sites, 4 O-linked glycans (15 sites)"/>
</dbReference>
<dbReference type="iPTMnet" id="O75056"/>
<dbReference type="PhosphoSitePlus" id="O75056"/>
<dbReference type="BioMuta" id="SDC3"/>
<dbReference type="jPOST" id="O75056"/>
<dbReference type="MassIVE" id="O75056"/>
<dbReference type="PaxDb" id="9606-ENSP00000344468"/>
<dbReference type="PeptideAtlas" id="O75056"/>
<dbReference type="ProteomicsDB" id="49730"/>
<dbReference type="Pumba" id="O75056"/>
<dbReference type="TopDownProteomics" id="O75056"/>
<dbReference type="Antibodypedia" id="1502">
    <property type="antibodies" value="228 antibodies from 32 providers"/>
</dbReference>
<dbReference type="DNASU" id="9672"/>
<dbReference type="Ensembl" id="ENST00000339394.7">
    <property type="protein sequence ID" value="ENSP00000344468.6"/>
    <property type="gene ID" value="ENSG00000162512.16"/>
</dbReference>
<dbReference type="GeneID" id="9672"/>
<dbReference type="KEGG" id="hsa:9672"/>
<dbReference type="MANE-Select" id="ENST00000339394.7">
    <property type="protein sequence ID" value="ENSP00000344468.6"/>
    <property type="RefSeq nucleotide sequence ID" value="NM_014654.4"/>
    <property type="RefSeq protein sequence ID" value="NP_055469.3"/>
</dbReference>
<dbReference type="UCSC" id="uc001bse.3">
    <property type="organism name" value="human"/>
</dbReference>
<dbReference type="AGR" id="HGNC:10660"/>
<dbReference type="CTD" id="9672"/>
<dbReference type="DisGeNET" id="9672"/>
<dbReference type="GeneCards" id="SDC3"/>
<dbReference type="HGNC" id="HGNC:10660">
    <property type="gene designation" value="SDC3"/>
</dbReference>
<dbReference type="HPA" id="ENSG00000162512">
    <property type="expression patterns" value="Low tissue specificity"/>
</dbReference>
<dbReference type="MalaCards" id="SDC3"/>
<dbReference type="MIM" id="186357">
    <property type="type" value="gene"/>
</dbReference>
<dbReference type="neXtProt" id="NX_O75056"/>
<dbReference type="OpenTargets" id="ENSG00000162512"/>
<dbReference type="PharmGKB" id="PA35590"/>
<dbReference type="VEuPathDB" id="HostDB:ENSG00000162512"/>
<dbReference type="eggNOG" id="ENOG502QTD2">
    <property type="taxonomic scope" value="Eukaryota"/>
</dbReference>
<dbReference type="GeneTree" id="ENSGT00940000160209"/>
<dbReference type="HOGENOM" id="CLU_047258_0_0_1"/>
<dbReference type="InParanoid" id="O75056"/>
<dbReference type="OMA" id="EMQPSES"/>
<dbReference type="OrthoDB" id="10044468at2759"/>
<dbReference type="PAN-GO" id="O75056">
    <property type="GO annotations" value="2 GO annotations based on evolutionary models"/>
</dbReference>
<dbReference type="PhylomeDB" id="O75056"/>
<dbReference type="TreeFam" id="TF320463"/>
<dbReference type="PathwayCommons" id="O75056"/>
<dbReference type="Reactome" id="R-HSA-1971475">
    <property type="pathway name" value="A tetrasaccharide linker sequence is required for GAG synthesis"/>
</dbReference>
<dbReference type="Reactome" id="R-HSA-2022928">
    <property type="pathway name" value="HS-GAG biosynthesis"/>
</dbReference>
<dbReference type="Reactome" id="R-HSA-2024096">
    <property type="pathway name" value="HS-GAG degradation"/>
</dbReference>
<dbReference type="Reactome" id="R-HSA-202733">
    <property type="pathway name" value="Cell surface interactions at the vascular wall"/>
</dbReference>
<dbReference type="Reactome" id="R-HSA-3000170">
    <property type="pathway name" value="Syndecan interactions"/>
</dbReference>
<dbReference type="Reactome" id="R-HSA-3560783">
    <property type="pathway name" value="Defective B4GALT7 causes EDS, progeroid type"/>
</dbReference>
<dbReference type="Reactome" id="R-HSA-3560801">
    <property type="pathway name" value="Defective B3GAT3 causes JDSSDHD"/>
</dbReference>
<dbReference type="Reactome" id="R-HSA-3656237">
    <property type="pathway name" value="Defective EXT2 causes exostoses 2"/>
</dbReference>
<dbReference type="Reactome" id="R-HSA-3656253">
    <property type="pathway name" value="Defective EXT1 causes exostoses 1, TRPS2 and CHDS"/>
</dbReference>
<dbReference type="Reactome" id="R-HSA-4420332">
    <property type="pathway name" value="Defective B3GALT6 causes EDSP2 and SEMDJL1"/>
</dbReference>
<dbReference type="Reactome" id="R-HSA-9694614">
    <property type="pathway name" value="Attachment and Entry"/>
</dbReference>
<dbReference type="Reactome" id="R-HSA-975634">
    <property type="pathway name" value="Retinoid metabolism and transport"/>
</dbReference>
<dbReference type="Reactome" id="R-HSA-9820960">
    <property type="pathway name" value="Respiratory syncytial virus (RSV) attachment and entry"/>
</dbReference>
<dbReference type="Reactome" id="R-HSA-9833110">
    <property type="pathway name" value="RSV-host interactions"/>
</dbReference>
<dbReference type="SignaLink" id="O75056"/>
<dbReference type="SIGNOR" id="O75056"/>
<dbReference type="BioGRID-ORCS" id="9672">
    <property type="hits" value="14 hits in 1159 CRISPR screens"/>
</dbReference>
<dbReference type="ChiTaRS" id="SDC3">
    <property type="organism name" value="human"/>
</dbReference>
<dbReference type="GeneWiki" id="SDC3"/>
<dbReference type="GenomeRNAi" id="9672"/>
<dbReference type="Pharos" id="O75056">
    <property type="development level" value="Tbio"/>
</dbReference>
<dbReference type="PRO" id="PR:O75056"/>
<dbReference type="Proteomes" id="UP000005640">
    <property type="component" value="Chromosome 1"/>
</dbReference>
<dbReference type="RNAct" id="O75056">
    <property type="molecule type" value="protein"/>
</dbReference>
<dbReference type="Bgee" id="ENSG00000162512">
    <property type="expression patterns" value="Expressed in right adrenal gland cortex and 160 other cell types or tissues"/>
</dbReference>
<dbReference type="ExpressionAtlas" id="O75056">
    <property type="expression patterns" value="baseline and differential"/>
</dbReference>
<dbReference type="GO" id="GO:0009986">
    <property type="term" value="C:cell surface"/>
    <property type="evidence" value="ECO:0000318"/>
    <property type="project" value="GO_Central"/>
</dbReference>
<dbReference type="GO" id="GO:0062023">
    <property type="term" value="C:collagen-containing extracellular matrix"/>
    <property type="evidence" value="ECO:0007005"/>
    <property type="project" value="BHF-UCL"/>
</dbReference>
<dbReference type="GO" id="GO:0005796">
    <property type="term" value="C:Golgi lumen"/>
    <property type="evidence" value="ECO:0000304"/>
    <property type="project" value="Reactome"/>
</dbReference>
<dbReference type="GO" id="GO:0043202">
    <property type="term" value="C:lysosomal lumen"/>
    <property type="evidence" value="ECO:0000304"/>
    <property type="project" value="Reactome"/>
</dbReference>
<dbReference type="GO" id="GO:0016020">
    <property type="term" value="C:membrane"/>
    <property type="evidence" value="ECO:0000250"/>
    <property type="project" value="UniProtKB"/>
</dbReference>
<dbReference type="GO" id="GO:0044393">
    <property type="term" value="C:microspike"/>
    <property type="evidence" value="ECO:0000250"/>
    <property type="project" value="UniProtKB"/>
</dbReference>
<dbReference type="GO" id="GO:0005886">
    <property type="term" value="C:plasma membrane"/>
    <property type="evidence" value="ECO:0000250"/>
    <property type="project" value="UniProtKB"/>
</dbReference>
<dbReference type="GO" id="GO:0042802">
    <property type="term" value="F:identical protein binding"/>
    <property type="evidence" value="ECO:0000353"/>
    <property type="project" value="IntAct"/>
</dbReference>
<dbReference type="GO" id="GO:0016477">
    <property type="term" value="P:cell migration"/>
    <property type="evidence" value="ECO:0000318"/>
    <property type="project" value="GO_Central"/>
</dbReference>
<dbReference type="InterPro" id="IPR003585">
    <property type="entry name" value="Neurexin-like"/>
</dbReference>
<dbReference type="InterPro" id="IPR001050">
    <property type="entry name" value="Syndecan"/>
</dbReference>
<dbReference type="InterPro" id="IPR027789">
    <property type="entry name" value="Syndecan/Neurexin_dom"/>
</dbReference>
<dbReference type="InterPro" id="IPR030479">
    <property type="entry name" value="Syndecan_CS"/>
</dbReference>
<dbReference type="PANTHER" id="PTHR10915">
    <property type="entry name" value="SYNDECAN"/>
    <property type="match status" value="1"/>
</dbReference>
<dbReference type="PANTHER" id="PTHR10915:SF7">
    <property type="entry name" value="SYNDECAN-3"/>
    <property type="match status" value="1"/>
</dbReference>
<dbReference type="Pfam" id="PF01034">
    <property type="entry name" value="Syndecan"/>
    <property type="match status" value="1"/>
</dbReference>
<dbReference type="SMART" id="SM00294">
    <property type="entry name" value="4.1m"/>
    <property type="match status" value="1"/>
</dbReference>
<dbReference type="PROSITE" id="PS00964">
    <property type="entry name" value="SYNDECAN"/>
    <property type="match status" value="1"/>
</dbReference>